<gene>
    <name evidence="1" type="primary">dtd</name>
    <name type="ordered locus">FTN_0056</name>
</gene>
<proteinExistence type="inferred from homology"/>
<organism>
    <name type="scientific">Francisella tularensis subsp. novicida (strain U112)</name>
    <dbReference type="NCBI Taxonomy" id="401614"/>
    <lineage>
        <taxon>Bacteria</taxon>
        <taxon>Pseudomonadati</taxon>
        <taxon>Pseudomonadota</taxon>
        <taxon>Gammaproteobacteria</taxon>
        <taxon>Thiotrichales</taxon>
        <taxon>Francisellaceae</taxon>
        <taxon>Francisella</taxon>
    </lineage>
</organism>
<dbReference type="EC" id="3.1.1.96" evidence="1"/>
<dbReference type="EMBL" id="CP000439">
    <property type="protein sequence ID" value="ABK88967.1"/>
    <property type="molecule type" value="Genomic_DNA"/>
</dbReference>
<dbReference type="RefSeq" id="WP_003032672.1">
    <property type="nucleotide sequence ID" value="NZ_CP009633.1"/>
</dbReference>
<dbReference type="SMR" id="A0Q402"/>
<dbReference type="GeneID" id="75264445"/>
<dbReference type="KEGG" id="ftn:FTN_0056"/>
<dbReference type="KEGG" id="ftx:AW25_144"/>
<dbReference type="BioCyc" id="FTUL401614:G1G75-59-MONOMER"/>
<dbReference type="Proteomes" id="UP000000762">
    <property type="component" value="Chromosome"/>
</dbReference>
<dbReference type="GO" id="GO:0005737">
    <property type="term" value="C:cytoplasm"/>
    <property type="evidence" value="ECO:0007669"/>
    <property type="project" value="UniProtKB-SubCell"/>
</dbReference>
<dbReference type="GO" id="GO:0051500">
    <property type="term" value="F:D-tyrosyl-tRNA(Tyr) deacylase activity"/>
    <property type="evidence" value="ECO:0007669"/>
    <property type="project" value="TreeGrafter"/>
</dbReference>
<dbReference type="GO" id="GO:0106026">
    <property type="term" value="F:Gly-tRNA(Ala) deacylase activity"/>
    <property type="evidence" value="ECO:0007669"/>
    <property type="project" value="UniProtKB-UniRule"/>
</dbReference>
<dbReference type="GO" id="GO:0043908">
    <property type="term" value="F:Ser(Gly)-tRNA(Ala) hydrolase activity"/>
    <property type="evidence" value="ECO:0007669"/>
    <property type="project" value="UniProtKB-UniRule"/>
</dbReference>
<dbReference type="GO" id="GO:0000049">
    <property type="term" value="F:tRNA binding"/>
    <property type="evidence" value="ECO:0007669"/>
    <property type="project" value="UniProtKB-UniRule"/>
</dbReference>
<dbReference type="GO" id="GO:0019478">
    <property type="term" value="P:D-amino acid catabolic process"/>
    <property type="evidence" value="ECO:0007669"/>
    <property type="project" value="UniProtKB-UniRule"/>
</dbReference>
<dbReference type="FunFam" id="3.50.80.10:FF:000001">
    <property type="entry name" value="D-aminoacyl-tRNA deacylase"/>
    <property type="match status" value="1"/>
</dbReference>
<dbReference type="Gene3D" id="3.50.80.10">
    <property type="entry name" value="D-tyrosyl-tRNA(Tyr) deacylase"/>
    <property type="match status" value="1"/>
</dbReference>
<dbReference type="HAMAP" id="MF_00518">
    <property type="entry name" value="Deacylase_Dtd"/>
    <property type="match status" value="1"/>
</dbReference>
<dbReference type="InterPro" id="IPR003732">
    <property type="entry name" value="Daa-tRNA_deacyls_DTD"/>
</dbReference>
<dbReference type="InterPro" id="IPR023509">
    <property type="entry name" value="DTD-like_sf"/>
</dbReference>
<dbReference type="NCBIfam" id="TIGR00256">
    <property type="entry name" value="D-aminoacyl-tRNA deacylase"/>
    <property type="match status" value="1"/>
</dbReference>
<dbReference type="PANTHER" id="PTHR10472:SF5">
    <property type="entry name" value="D-AMINOACYL-TRNA DEACYLASE 1"/>
    <property type="match status" value="1"/>
</dbReference>
<dbReference type="PANTHER" id="PTHR10472">
    <property type="entry name" value="D-TYROSYL-TRNA TYR DEACYLASE"/>
    <property type="match status" value="1"/>
</dbReference>
<dbReference type="Pfam" id="PF02580">
    <property type="entry name" value="Tyr_Deacylase"/>
    <property type="match status" value="1"/>
</dbReference>
<dbReference type="SUPFAM" id="SSF69500">
    <property type="entry name" value="DTD-like"/>
    <property type="match status" value="1"/>
</dbReference>
<evidence type="ECO:0000255" key="1">
    <source>
        <dbReference type="HAMAP-Rule" id="MF_00518"/>
    </source>
</evidence>
<comment type="function">
    <text evidence="1">An aminoacyl-tRNA editing enzyme that deacylates mischarged D-aminoacyl-tRNAs. Also deacylates mischarged glycyl-tRNA(Ala), protecting cells against glycine mischarging by AlaRS. Acts via tRNA-based rather than protein-based catalysis; rejects L-amino acids rather than detecting D-amino acids in the active site. By recycling D-aminoacyl-tRNA to D-amino acids and free tRNA molecules, this enzyme counteracts the toxicity associated with the formation of D-aminoacyl-tRNA entities in vivo and helps enforce protein L-homochirality.</text>
</comment>
<comment type="catalytic activity">
    <reaction evidence="1">
        <text>glycyl-tRNA(Ala) + H2O = tRNA(Ala) + glycine + H(+)</text>
        <dbReference type="Rhea" id="RHEA:53744"/>
        <dbReference type="Rhea" id="RHEA-COMP:9657"/>
        <dbReference type="Rhea" id="RHEA-COMP:13640"/>
        <dbReference type="ChEBI" id="CHEBI:15377"/>
        <dbReference type="ChEBI" id="CHEBI:15378"/>
        <dbReference type="ChEBI" id="CHEBI:57305"/>
        <dbReference type="ChEBI" id="CHEBI:78442"/>
        <dbReference type="ChEBI" id="CHEBI:78522"/>
        <dbReference type="EC" id="3.1.1.96"/>
    </reaction>
</comment>
<comment type="catalytic activity">
    <reaction evidence="1">
        <text>a D-aminoacyl-tRNA + H2O = a tRNA + a D-alpha-amino acid + H(+)</text>
        <dbReference type="Rhea" id="RHEA:13953"/>
        <dbReference type="Rhea" id="RHEA-COMP:10123"/>
        <dbReference type="Rhea" id="RHEA-COMP:10124"/>
        <dbReference type="ChEBI" id="CHEBI:15377"/>
        <dbReference type="ChEBI" id="CHEBI:15378"/>
        <dbReference type="ChEBI" id="CHEBI:59871"/>
        <dbReference type="ChEBI" id="CHEBI:78442"/>
        <dbReference type="ChEBI" id="CHEBI:79333"/>
        <dbReference type="EC" id="3.1.1.96"/>
    </reaction>
</comment>
<comment type="subunit">
    <text evidence="1">Homodimer.</text>
</comment>
<comment type="subcellular location">
    <subcellularLocation>
        <location evidence="1">Cytoplasm</location>
    </subcellularLocation>
</comment>
<comment type="domain">
    <text evidence="1">A Gly-cisPro motif from one monomer fits into the active site of the other monomer to allow specific chiral rejection of L-amino acids.</text>
</comment>
<comment type="similarity">
    <text evidence="1">Belongs to the DTD family.</text>
</comment>
<reference key="1">
    <citation type="journal article" date="2007" name="Genome Biol.">
        <title>Comparison of Francisella tularensis genomes reveals evolutionary events associated with the emergence of human pathogenic strains.</title>
        <authorList>
            <person name="Rohmer L."/>
            <person name="Fong C."/>
            <person name="Abmayr S."/>
            <person name="Wasnick M."/>
            <person name="Larson Freeman T.J."/>
            <person name="Radey M."/>
            <person name="Guina T."/>
            <person name="Svensson K."/>
            <person name="Hayden H.S."/>
            <person name="Jacobs M."/>
            <person name="Gallagher L.A."/>
            <person name="Manoil C."/>
            <person name="Ernst R.K."/>
            <person name="Drees B."/>
            <person name="Buckley D."/>
            <person name="Haugen E."/>
            <person name="Bovee D."/>
            <person name="Zhou Y."/>
            <person name="Chang J."/>
            <person name="Levy R."/>
            <person name="Lim R."/>
            <person name="Gillett W."/>
            <person name="Guenthener D."/>
            <person name="Kang A."/>
            <person name="Shaffer S.A."/>
            <person name="Taylor G."/>
            <person name="Chen J."/>
            <person name="Gallis B."/>
            <person name="D'Argenio D.A."/>
            <person name="Forsman M."/>
            <person name="Olson M.V."/>
            <person name="Goodlett D.R."/>
            <person name="Kaul R."/>
            <person name="Miller S.I."/>
            <person name="Brittnacher M.J."/>
        </authorList>
    </citation>
    <scope>NUCLEOTIDE SEQUENCE [LARGE SCALE GENOMIC DNA]</scope>
    <source>
        <strain>U112</strain>
    </source>
</reference>
<protein>
    <recommendedName>
        <fullName evidence="1">D-aminoacyl-tRNA deacylase</fullName>
        <shortName evidence="1">DTD</shortName>
        <ecNumber evidence="1">3.1.1.96</ecNumber>
    </recommendedName>
    <alternativeName>
        <fullName evidence="1">Gly-tRNA(Ala) deacylase</fullName>
    </alternativeName>
</protein>
<sequence>MLSIIQRVNCANVVVDNQKVADINKGILALVCVEKEDTQQNFEKMADKIIKYRIFEDDAGKMNLSLADIDAEIILVPQFTLAADTKKGNRPSFSSGCPPEIAKEKFKEFENIFRRKYNKVQTGIFGADMKVSLTNDGPVTFSFKI</sequence>
<keyword id="KW-0963">Cytoplasm</keyword>
<keyword id="KW-0378">Hydrolase</keyword>
<keyword id="KW-0694">RNA-binding</keyword>
<keyword id="KW-0820">tRNA-binding</keyword>
<accession>A0Q402</accession>
<feature type="chain" id="PRO_1000127536" description="D-aminoacyl-tRNA deacylase">
    <location>
        <begin position="1"/>
        <end position="145"/>
    </location>
</feature>
<feature type="short sequence motif" description="Gly-cisPro motif, important for rejection of L-amino acids" evidence="1">
    <location>
        <begin position="137"/>
        <end position="138"/>
    </location>
</feature>
<name>DTD_FRATN</name>